<keyword id="KW-0007">Acetylation</keyword>
<keyword id="KW-0025">Alternative splicing</keyword>
<keyword id="KW-1003">Cell membrane</keyword>
<keyword id="KW-0963">Cytoplasm</keyword>
<keyword id="KW-0256">Endoplasmic reticulum</keyword>
<keyword id="KW-0967">Endosome</keyword>
<keyword id="KW-0445">Lipid transport</keyword>
<keyword id="KW-0446">Lipid-binding</keyword>
<keyword id="KW-0472">Membrane</keyword>
<keyword id="KW-0539">Nucleus</keyword>
<keyword id="KW-0597">Phosphoprotein</keyword>
<keyword id="KW-1185">Reference proteome</keyword>
<keyword id="KW-0813">Transport</keyword>
<gene>
    <name type="primary">Osbpl6</name>
</gene>
<feature type="initiator methionine" description="Removed" evidence="1">
    <location>
        <position position="1"/>
    </location>
</feature>
<feature type="chain" id="PRO_0000100376" description="Oxysterol-binding protein-related protein 6">
    <location>
        <begin position="2"/>
        <end position="959"/>
    </location>
</feature>
<feature type="domain" description="PH" evidence="2">
    <location>
        <begin position="86"/>
        <end position="181"/>
    </location>
</feature>
<feature type="region of interest" description="Disordered" evidence="3">
    <location>
        <begin position="1"/>
        <end position="60"/>
    </location>
</feature>
<feature type="compositionally biased region" description="Low complexity" evidence="3">
    <location>
        <begin position="14"/>
        <end position="29"/>
    </location>
</feature>
<feature type="compositionally biased region" description="Basic and acidic residues" evidence="3">
    <location>
        <begin position="30"/>
        <end position="40"/>
    </location>
</feature>
<feature type="compositionally biased region" description="Polar residues" evidence="3">
    <location>
        <begin position="42"/>
        <end position="53"/>
    </location>
</feature>
<feature type="modified residue" description="N-acetylserine" evidence="1">
    <location>
        <position position="2"/>
    </location>
</feature>
<feature type="modified residue" description="Phosphoserine" evidence="1">
    <location>
        <position position="35"/>
    </location>
</feature>
<feature type="modified residue" description="Phosphoserine" evidence="1">
    <location>
        <position position="190"/>
    </location>
</feature>
<feature type="modified residue" description="Phosphoserine" evidence="1">
    <location>
        <position position="290"/>
    </location>
</feature>
<feature type="splice variant" id="VSP_010012" description="In isoform 2." evidence="7">
    <location>
        <begin position="299"/>
        <end position="329"/>
    </location>
</feature>
<feature type="sequence conflict" description="In Ref. 1; BAC29854." evidence="8" ref="1">
    <original>W</original>
    <variation>L</variation>
    <location>
        <position position="796"/>
    </location>
</feature>
<proteinExistence type="evidence at protein level"/>
<comment type="function">
    <text evidence="1 6">Regulates cellular transport and efflux of cholesterol (By similarity). Plays a role in phosphatidylinositol-4-phophate (PI4P) turnover at the neuronal membrane (PubMed:30028970). Binds via its PH domain PI4P, phosphatidylinositol-4,5-diphosphate, phosphatidylinositol-3,4,5-triphosphate, and phosphatidic acid (PubMed:30028970). Weakly binds 25-hydroxycholesterol (By similarity).</text>
</comment>
<comment type="subunit">
    <text evidence="6">Homodimer (PubMed:30028970). Interacts with OSBPL3 (PubMed:30028970).</text>
</comment>
<comment type="subcellular location">
    <subcellularLocation>
        <location evidence="4">Nucleus envelope</location>
    </subcellularLocation>
    <subcellularLocation>
        <location evidence="4 6">Cytoplasm</location>
        <location evidence="4 6">Cytosol</location>
    </subcellularLocation>
    <subcellularLocation>
        <location evidence="4 6">Endoplasmic reticulum membrane</location>
        <topology evidence="8">Peripheral membrane protein</topology>
    </subcellularLocation>
    <subcellularLocation>
        <location evidence="4">Cell membrane</location>
        <topology evidence="8">Peripheral membrane protein</topology>
    </subcellularLocation>
    <subcellularLocation>
        <location evidence="6">Endosome membrane</location>
        <topology evidence="8">Peripheral membrane protein</topology>
    </subcellularLocation>
    <text evidence="6">Co-localizes with OSBPL3 at contact sites between the plasma membrane and the endoplasmic reticulum.</text>
</comment>
<comment type="alternative products">
    <event type="alternative splicing"/>
    <isoform>
        <id>Q8BXR9-1</id>
        <name>1</name>
        <sequence type="displayed"/>
    </isoform>
    <isoform>
        <id>Q8BXR9-2</id>
        <name>2</name>
        <sequence type="described" ref="VSP_010012"/>
    </isoform>
</comment>
<comment type="tissue specificity">
    <text evidence="4 5 6">Expressed in skin, respiratory epithelium, small intestine epithelium, pancreas, striated muscle, brain, spinal ganglia, and nervous plexus of the intestine (at protein level) (PubMed:14593528, PubMed:30028970). In the brain, specifically in the cerebellum, it is expressed in Purkinje and granule cells (PubMed:30028970). Expressed in hepatocytes and macrophages (PubMed:26941018).</text>
</comment>
<comment type="developmental stage">
    <text evidence="6">Detected in the brain at 18.5 days post coitum (dpc), with expression increasing till it reaches its peak expression at 28 dpc.</text>
</comment>
<comment type="induction">
    <text evidence="5">By acetylated low-density lipoprotein and dietary intake of cholesterols.</text>
</comment>
<comment type="similarity">
    <text evidence="8">Belongs to the OSBP family.</text>
</comment>
<accession>Q8BXR9</accession>
<accession>Q8BYW2</accession>
<dbReference type="EMBL" id="AK037703">
    <property type="protein sequence ID" value="BAC29854.1"/>
    <property type="molecule type" value="mRNA"/>
</dbReference>
<dbReference type="EMBL" id="AK044411">
    <property type="protein sequence ID" value="BAC31907.1"/>
    <property type="molecule type" value="mRNA"/>
</dbReference>
<dbReference type="CCDS" id="CCDS71078.1">
    <molecule id="Q8BXR9-1"/>
</dbReference>
<dbReference type="CCDS" id="CCDS71079.1">
    <molecule id="Q8BXR9-2"/>
</dbReference>
<dbReference type="RefSeq" id="NP_001277662.1">
    <molecule id="Q8BXR9-1"/>
    <property type="nucleotide sequence ID" value="NM_001290733.1"/>
</dbReference>
<dbReference type="RefSeq" id="NP_001277663.1">
    <molecule id="Q8BXR9-2"/>
    <property type="nucleotide sequence ID" value="NM_001290734.1"/>
</dbReference>
<dbReference type="RefSeq" id="NP_663500.2">
    <property type="nucleotide sequence ID" value="NM_145525.3"/>
</dbReference>
<dbReference type="RefSeq" id="XP_011238164.1">
    <molecule id="Q8BXR9-1"/>
    <property type="nucleotide sequence ID" value="XM_011239862.3"/>
</dbReference>
<dbReference type="SMR" id="Q8BXR9"/>
<dbReference type="BioGRID" id="221173">
    <property type="interactions" value="11"/>
</dbReference>
<dbReference type="FunCoup" id="Q8BXR9">
    <property type="interactions" value="1698"/>
</dbReference>
<dbReference type="IntAct" id="Q8BXR9">
    <property type="interactions" value="1"/>
</dbReference>
<dbReference type="STRING" id="10090.ENSMUSP00000077123"/>
<dbReference type="GlyGen" id="Q8BXR9">
    <property type="glycosylation" value="3 sites, 1 N-linked glycan (1 site), 1 O-linked glycan (2 sites)"/>
</dbReference>
<dbReference type="iPTMnet" id="Q8BXR9"/>
<dbReference type="PhosphoSitePlus" id="Q8BXR9"/>
<dbReference type="PaxDb" id="10090-ENSMUSP00000077123"/>
<dbReference type="PeptideAtlas" id="Q8BXR9"/>
<dbReference type="ProteomicsDB" id="294113">
    <molecule id="Q8BXR9-1"/>
</dbReference>
<dbReference type="ProteomicsDB" id="294114">
    <molecule id="Q8BXR9-2"/>
</dbReference>
<dbReference type="Pumba" id="Q8BXR9"/>
<dbReference type="Antibodypedia" id="33930">
    <property type="antibodies" value="123 antibodies from 23 providers"/>
</dbReference>
<dbReference type="DNASU" id="99031"/>
<dbReference type="Ensembl" id="ENSMUST00000111929.8">
    <molecule id="Q8BXR9-1"/>
    <property type="protein sequence ID" value="ENSMUSP00000107560.2"/>
    <property type="gene ID" value="ENSMUSG00000042359.19"/>
</dbReference>
<dbReference type="Ensembl" id="ENSMUST00000111930.9">
    <molecule id="Q8BXR9-2"/>
    <property type="protein sequence ID" value="ENSMUSP00000107561.3"/>
    <property type="gene ID" value="ENSMUSG00000042359.19"/>
</dbReference>
<dbReference type="GeneID" id="99031"/>
<dbReference type="KEGG" id="mmu:99031"/>
<dbReference type="UCSC" id="uc008kfb.2">
    <molecule id="Q8BXR9-1"/>
    <property type="organism name" value="mouse"/>
</dbReference>
<dbReference type="UCSC" id="uc008kfc.2">
    <molecule id="Q8BXR9-2"/>
    <property type="organism name" value="mouse"/>
</dbReference>
<dbReference type="AGR" id="MGI:2139014"/>
<dbReference type="CTD" id="114880"/>
<dbReference type="MGI" id="MGI:2139014">
    <property type="gene designation" value="Osbpl6"/>
</dbReference>
<dbReference type="VEuPathDB" id="HostDB:ENSMUSG00000042359"/>
<dbReference type="eggNOG" id="KOG1737">
    <property type="taxonomic scope" value="Eukaryota"/>
</dbReference>
<dbReference type="GeneTree" id="ENSGT00940000156791"/>
<dbReference type="HOGENOM" id="CLU_007105_4_1_1"/>
<dbReference type="InParanoid" id="Q8BXR9"/>
<dbReference type="OrthoDB" id="1854502at2759"/>
<dbReference type="Reactome" id="R-MMU-192105">
    <property type="pathway name" value="Synthesis of bile acids and bile salts"/>
</dbReference>
<dbReference type="BioGRID-ORCS" id="99031">
    <property type="hits" value="4 hits in 83 CRISPR screens"/>
</dbReference>
<dbReference type="ChiTaRS" id="Osbpl6">
    <property type="organism name" value="mouse"/>
</dbReference>
<dbReference type="PRO" id="PR:Q8BXR9"/>
<dbReference type="Proteomes" id="UP000000589">
    <property type="component" value="Chromosome 2"/>
</dbReference>
<dbReference type="RNAct" id="Q8BXR9">
    <property type="molecule type" value="protein"/>
</dbReference>
<dbReference type="Bgee" id="ENSMUSG00000042359">
    <property type="expression patterns" value="Expressed in nasal cavity and 235 other cell types or tissues"/>
</dbReference>
<dbReference type="ExpressionAtlas" id="Q8BXR9">
    <property type="expression patterns" value="baseline and differential"/>
</dbReference>
<dbReference type="GO" id="GO:0005829">
    <property type="term" value="C:cytosol"/>
    <property type="evidence" value="ECO:0007669"/>
    <property type="project" value="UniProtKB-SubCell"/>
</dbReference>
<dbReference type="GO" id="GO:0005789">
    <property type="term" value="C:endoplasmic reticulum membrane"/>
    <property type="evidence" value="ECO:0007669"/>
    <property type="project" value="UniProtKB-SubCell"/>
</dbReference>
<dbReference type="GO" id="GO:0010008">
    <property type="term" value="C:endosome membrane"/>
    <property type="evidence" value="ECO:0007669"/>
    <property type="project" value="UniProtKB-SubCell"/>
</dbReference>
<dbReference type="GO" id="GO:0005635">
    <property type="term" value="C:nuclear envelope"/>
    <property type="evidence" value="ECO:0007669"/>
    <property type="project" value="UniProtKB-SubCell"/>
</dbReference>
<dbReference type="GO" id="GO:0005886">
    <property type="term" value="C:plasma membrane"/>
    <property type="evidence" value="ECO:0007669"/>
    <property type="project" value="UniProtKB-SubCell"/>
</dbReference>
<dbReference type="GO" id="GO:0008289">
    <property type="term" value="F:lipid binding"/>
    <property type="evidence" value="ECO:0007669"/>
    <property type="project" value="UniProtKB-KW"/>
</dbReference>
<dbReference type="GO" id="GO:0005319">
    <property type="term" value="F:lipid transporter activity"/>
    <property type="evidence" value="ECO:0007669"/>
    <property type="project" value="UniProtKB-ARBA"/>
</dbReference>
<dbReference type="CDD" id="cd13287">
    <property type="entry name" value="PH_ORP3_ORP6_ORP7"/>
    <property type="match status" value="1"/>
</dbReference>
<dbReference type="FunFam" id="2.30.29.30:FF:000011">
    <property type="entry name" value="Oxysterol-binding protein"/>
    <property type="match status" value="1"/>
</dbReference>
<dbReference type="FunFam" id="2.40.160.120:FF:000001">
    <property type="entry name" value="Oxysterol-binding protein"/>
    <property type="match status" value="1"/>
</dbReference>
<dbReference type="FunFam" id="3.30.70.3490:FF:000002">
    <property type="entry name" value="Oxysterol-binding protein"/>
    <property type="match status" value="1"/>
</dbReference>
<dbReference type="Gene3D" id="2.40.160.120">
    <property type="match status" value="1"/>
</dbReference>
<dbReference type="Gene3D" id="3.30.70.3490">
    <property type="match status" value="1"/>
</dbReference>
<dbReference type="Gene3D" id="2.30.29.30">
    <property type="entry name" value="Pleckstrin-homology domain (PH domain)/Phosphotyrosine-binding domain (PTB)"/>
    <property type="match status" value="1"/>
</dbReference>
<dbReference type="InterPro" id="IPR037239">
    <property type="entry name" value="OSBP_sf"/>
</dbReference>
<dbReference type="InterPro" id="IPR000648">
    <property type="entry name" value="Oxysterol-bd"/>
</dbReference>
<dbReference type="InterPro" id="IPR018494">
    <property type="entry name" value="Oxysterol-bd_CS"/>
</dbReference>
<dbReference type="InterPro" id="IPR011993">
    <property type="entry name" value="PH-like_dom_sf"/>
</dbReference>
<dbReference type="InterPro" id="IPR041680">
    <property type="entry name" value="PH_8"/>
</dbReference>
<dbReference type="InterPro" id="IPR001849">
    <property type="entry name" value="PH_domain"/>
</dbReference>
<dbReference type="PANTHER" id="PTHR10972">
    <property type="entry name" value="OXYSTEROL-BINDING PROTEIN-RELATED"/>
    <property type="match status" value="1"/>
</dbReference>
<dbReference type="PANTHER" id="PTHR10972:SF76">
    <property type="entry name" value="OXYSTEROL-BINDING PROTEIN-RELATED PROTEIN 6"/>
    <property type="match status" value="1"/>
</dbReference>
<dbReference type="Pfam" id="PF01237">
    <property type="entry name" value="Oxysterol_BP"/>
    <property type="match status" value="1"/>
</dbReference>
<dbReference type="Pfam" id="PF15409">
    <property type="entry name" value="PH_8"/>
    <property type="match status" value="1"/>
</dbReference>
<dbReference type="SMART" id="SM00233">
    <property type="entry name" value="PH"/>
    <property type="match status" value="1"/>
</dbReference>
<dbReference type="SUPFAM" id="SSF144000">
    <property type="entry name" value="Oxysterol-binding protein-like"/>
    <property type="match status" value="1"/>
</dbReference>
<dbReference type="SUPFAM" id="SSF50729">
    <property type="entry name" value="PH domain-like"/>
    <property type="match status" value="1"/>
</dbReference>
<dbReference type="PROSITE" id="PS01013">
    <property type="entry name" value="OSBP"/>
    <property type="match status" value="1"/>
</dbReference>
<dbReference type="PROSITE" id="PS50003">
    <property type="entry name" value="PH_DOMAIN"/>
    <property type="match status" value="1"/>
</dbReference>
<protein>
    <recommendedName>
        <fullName>Oxysterol-binding protein-related protein 6</fullName>
        <shortName>ORP-6</shortName>
        <shortName>OSBP-related protein 6</shortName>
    </recommendedName>
</protein>
<name>OSBL6_MOUSE</name>
<sequence>MSSDEKGISPAHKTSTPTHRSASSSTSSQRESRQSIHVLERTASSSTEPSVSRQLLEPEPIPLSKEADSWEIIEGLKIGQTNVQKPDRHEGFMLKKRKWPLKGWHKRFFVLDNGMLKYSKAPLDIQKGKVHGSIDVGLSVMSIKKKARRIDLDTEEHIYHLKVKSQDWFDAWVSKLRHHRLYRQNEIVRSPRDASFHIFPATSTAESSPAANVSVVDGKMQPNSFPWQSPLPCSNSLPATCTTGQSKVAAWLQDSEEMDRCAEDLAHCQSNLVELSKLLQNLEILQRTQSAPNFTDMQANCVDISKKDKRVTRRWRTKSVSKDTKIQLQEGPPAKGQFNTTRRRQRLAAAVATTVPFSATMSPVRLHSSNPNLCADIEFQTPPSHLTDPLESSTDYTKLQEEFCLIAQKVHSLLKSAFNSIAIEKEKLKQVVSEQDHNKGHSTQMARLRQSLSQALNQNAELRSRLNRIHSESTICDHVVSVNIIPSPDEPGEQIHVSLPLSQQVANESRLSMSESVSEFFDAQEVLLSASSSENEASDDESYISDVSDNISEDNTSVADNISRQILNGELTGGAFRNGRRTCLPAPCPDTSNINLWNILRNNIGKDLSKVSMPVELNEPLNTLQHLCEEMEYSELLDKASETDDPYERMVLVAAFAVSGYCSTYFRAGSKPFNPVLGETYECIREDKGFRFFSEQVSHHPPISACHCESKNFVFWQDIRWKNKFWGKSMEILPVGTLNVTLPKYGDYYVWNKVTTCIHNILSGRRWIEHYGEVTLRNTKSSVCICKLTFVKVNYWNSNVNEVQGVVIDQEGKVVHRLFGKWHEGLYCGVAPSAKCIWRPGSLPTNYELYYGFTRFAVELNELDPVLKDLLPPTDARFRPDQRFLEEGNLEAAAAEKQRVEELQRSRRRYMEENNLEHIPKFFKKVIDANQREAWVSNDTYWELRKDPGFSKVDSPVLW</sequence>
<evidence type="ECO:0000250" key="1">
    <source>
        <dbReference type="UniProtKB" id="Q9BZF3"/>
    </source>
</evidence>
<evidence type="ECO:0000255" key="2">
    <source>
        <dbReference type="PROSITE-ProRule" id="PRU00145"/>
    </source>
</evidence>
<evidence type="ECO:0000256" key="3">
    <source>
        <dbReference type="SAM" id="MobiDB-lite"/>
    </source>
</evidence>
<evidence type="ECO:0000269" key="4">
    <source>
    </source>
</evidence>
<evidence type="ECO:0000269" key="5">
    <source>
    </source>
</evidence>
<evidence type="ECO:0000269" key="6">
    <source>
    </source>
</evidence>
<evidence type="ECO:0000303" key="7">
    <source>
    </source>
</evidence>
<evidence type="ECO:0000305" key="8"/>
<organism>
    <name type="scientific">Mus musculus</name>
    <name type="common">Mouse</name>
    <dbReference type="NCBI Taxonomy" id="10090"/>
    <lineage>
        <taxon>Eukaryota</taxon>
        <taxon>Metazoa</taxon>
        <taxon>Chordata</taxon>
        <taxon>Craniata</taxon>
        <taxon>Vertebrata</taxon>
        <taxon>Euteleostomi</taxon>
        <taxon>Mammalia</taxon>
        <taxon>Eutheria</taxon>
        <taxon>Euarchontoglires</taxon>
        <taxon>Glires</taxon>
        <taxon>Rodentia</taxon>
        <taxon>Myomorpha</taxon>
        <taxon>Muroidea</taxon>
        <taxon>Muridae</taxon>
        <taxon>Murinae</taxon>
        <taxon>Mus</taxon>
        <taxon>Mus</taxon>
    </lineage>
</organism>
<reference key="1">
    <citation type="journal article" date="2005" name="Science">
        <title>The transcriptional landscape of the mammalian genome.</title>
        <authorList>
            <person name="Carninci P."/>
            <person name="Kasukawa T."/>
            <person name="Katayama S."/>
            <person name="Gough J."/>
            <person name="Frith M.C."/>
            <person name="Maeda N."/>
            <person name="Oyama R."/>
            <person name="Ravasi T."/>
            <person name="Lenhard B."/>
            <person name="Wells C."/>
            <person name="Kodzius R."/>
            <person name="Shimokawa K."/>
            <person name="Bajic V.B."/>
            <person name="Brenner S.E."/>
            <person name="Batalov S."/>
            <person name="Forrest A.R."/>
            <person name="Zavolan M."/>
            <person name="Davis M.J."/>
            <person name="Wilming L.G."/>
            <person name="Aidinis V."/>
            <person name="Allen J.E."/>
            <person name="Ambesi-Impiombato A."/>
            <person name="Apweiler R."/>
            <person name="Aturaliya R.N."/>
            <person name="Bailey T.L."/>
            <person name="Bansal M."/>
            <person name="Baxter L."/>
            <person name="Beisel K.W."/>
            <person name="Bersano T."/>
            <person name="Bono H."/>
            <person name="Chalk A.M."/>
            <person name="Chiu K.P."/>
            <person name="Choudhary V."/>
            <person name="Christoffels A."/>
            <person name="Clutterbuck D.R."/>
            <person name="Crowe M.L."/>
            <person name="Dalla E."/>
            <person name="Dalrymple B.P."/>
            <person name="de Bono B."/>
            <person name="Della Gatta G."/>
            <person name="di Bernardo D."/>
            <person name="Down T."/>
            <person name="Engstrom P."/>
            <person name="Fagiolini M."/>
            <person name="Faulkner G."/>
            <person name="Fletcher C.F."/>
            <person name="Fukushima T."/>
            <person name="Furuno M."/>
            <person name="Futaki S."/>
            <person name="Gariboldi M."/>
            <person name="Georgii-Hemming P."/>
            <person name="Gingeras T.R."/>
            <person name="Gojobori T."/>
            <person name="Green R.E."/>
            <person name="Gustincich S."/>
            <person name="Harbers M."/>
            <person name="Hayashi Y."/>
            <person name="Hensch T.K."/>
            <person name="Hirokawa N."/>
            <person name="Hill D."/>
            <person name="Huminiecki L."/>
            <person name="Iacono M."/>
            <person name="Ikeo K."/>
            <person name="Iwama A."/>
            <person name="Ishikawa T."/>
            <person name="Jakt M."/>
            <person name="Kanapin A."/>
            <person name="Katoh M."/>
            <person name="Kawasawa Y."/>
            <person name="Kelso J."/>
            <person name="Kitamura H."/>
            <person name="Kitano H."/>
            <person name="Kollias G."/>
            <person name="Krishnan S.P."/>
            <person name="Kruger A."/>
            <person name="Kummerfeld S.K."/>
            <person name="Kurochkin I.V."/>
            <person name="Lareau L.F."/>
            <person name="Lazarevic D."/>
            <person name="Lipovich L."/>
            <person name="Liu J."/>
            <person name="Liuni S."/>
            <person name="McWilliam S."/>
            <person name="Madan Babu M."/>
            <person name="Madera M."/>
            <person name="Marchionni L."/>
            <person name="Matsuda H."/>
            <person name="Matsuzawa S."/>
            <person name="Miki H."/>
            <person name="Mignone F."/>
            <person name="Miyake S."/>
            <person name="Morris K."/>
            <person name="Mottagui-Tabar S."/>
            <person name="Mulder N."/>
            <person name="Nakano N."/>
            <person name="Nakauchi H."/>
            <person name="Ng P."/>
            <person name="Nilsson R."/>
            <person name="Nishiguchi S."/>
            <person name="Nishikawa S."/>
            <person name="Nori F."/>
            <person name="Ohara O."/>
            <person name="Okazaki Y."/>
            <person name="Orlando V."/>
            <person name="Pang K.C."/>
            <person name="Pavan W.J."/>
            <person name="Pavesi G."/>
            <person name="Pesole G."/>
            <person name="Petrovsky N."/>
            <person name="Piazza S."/>
            <person name="Reed J."/>
            <person name="Reid J.F."/>
            <person name="Ring B.Z."/>
            <person name="Ringwald M."/>
            <person name="Rost B."/>
            <person name="Ruan Y."/>
            <person name="Salzberg S.L."/>
            <person name="Sandelin A."/>
            <person name="Schneider C."/>
            <person name="Schoenbach C."/>
            <person name="Sekiguchi K."/>
            <person name="Semple C.A."/>
            <person name="Seno S."/>
            <person name="Sessa L."/>
            <person name="Sheng Y."/>
            <person name="Shibata Y."/>
            <person name="Shimada H."/>
            <person name="Shimada K."/>
            <person name="Silva D."/>
            <person name="Sinclair B."/>
            <person name="Sperling S."/>
            <person name="Stupka E."/>
            <person name="Sugiura K."/>
            <person name="Sultana R."/>
            <person name="Takenaka Y."/>
            <person name="Taki K."/>
            <person name="Tammoja K."/>
            <person name="Tan S.L."/>
            <person name="Tang S."/>
            <person name="Taylor M.S."/>
            <person name="Tegner J."/>
            <person name="Teichmann S.A."/>
            <person name="Ueda H.R."/>
            <person name="van Nimwegen E."/>
            <person name="Verardo R."/>
            <person name="Wei C.L."/>
            <person name="Yagi K."/>
            <person name="Yamanishi H."/>
            <person name="Zabarovsky E."/>
            <person name="Zhu S."/>
            <person name="Zimmer A."/>
            <person name="Hide W."/>
            <person name="Bult C."/>
            <person name="Grimmond S.M."/>
            <person name="Teasdale R.D."/>
            <person name="Liu E.T."/>
            <person name="Brusic V."/>
            <person name="Quackenbush J."/>
            <person name="Wahlestedt C."/>
            <person name="Mattick J.S."/>
            <person name="Hume D.A."/>
            <person name="Kai C."/>
            <person name="Sasaki D."/>
            <person name="Tomaru Y."/>
            <person name="Fukuda S."/>
            <person name="Kanamori-Katayama M."/>
            <person name="Suzuki M."/>
            <person name="Aoki J."/>
            <person name="Arakawa T."/>
            <person name="Iida J."/>
            <person name="Imamura K."/>
            <person name="Itoh M."/>
            <person name="Kato T."/>
            <person name="Kawaji H."/>
            <person name="Kawagashira N."/>
            <person name="Kawashima T."/>
            <person name="Kojima M."/>
            <person name="Kondo S."/>
            <person name="Konno H."/>
            <person name="Nakano K."/>
            <person name="Ninomiya N."/>
            <person name="Nishio T."/>
            <person name="Okada M."/>
            <person name="Plessy C."/>
            <person name="Shibata K."/>
            <person name="Shiraki T."/>
            <person name="Suzuki S."/>
            <person name="Tagami M."/>
            <person name="Waki K."/>
            <person name="Watahiki A."/>
            <person name="Okamura-Oho Y."/>
            <person name="Suzuki H."/>
            <person name="Kawai J."/>
            <person name="Hayashizaki Y."/>
        </authorList>
    </citation>
    <scope>NUCLEOTIDE SEQUENCE [LARGE SCALE MRNA] (ISOFORMS 1 AND 2)</scope>
    <source>
        <strain>C57BL/6J</strain>
        <tissue>Retina</tissue>
        <tissue>Thymus</tissue>
    </source>
</reference>
<reference key="2">
    <citation type="journal article" date="2004" name="Cell Tissue Res.">
        <title>Subfamily III of mammalian oxysterol-binding protein (OSBP) homologues: the expression and intracellular localization of ORP3, ORP6, and ORP7.</title>
        <authorList>
            <person name="Lehto M."/>
            <person name="Tienari J."/>
            <person name="Lehtonen S."/>
            <person name="Lehtonen E."/>
            <person name="Olkkonen V.M."/>
        </authorList>
    </citation>
    <scope>SUBCELLULAR LOCATION</scope>
    <scope>TISSUE SPECIFICITY</scope>
</reference>
<reference key="3">
    <citation type="journal article" date="2010" name="Cell">
        <title>A tissue-specific atlas of mouse protein phosphorylation and expression.</title>
        <authorList>
            <person name="Huttlin E.L."/>
            <person name="Jedrychowski M.P."/>
            <person name="Elias J.E."/>
            <person name="Goswami T."/>
            <person name="Rad R."/>
            <person name="Beausoleil S.A."/>
            <person name="Villen J."/>
            <person name="Haas W."/>
            <person name="Sowa M.E."/>
            <person name="Gygi S.P."/>
        </authorList>
    </citation>
    <scope>IDENTIFICATION BY MASS SPECTROMETRY [LARGE SCALE ANALYSIS]</scope>
    <source>
        <tissue>Brain</tissue>
        <tissue>Heart</tissue>
        <tissue>Kidney</tissue>
        <tissue>Lung</tissue>
    </source>
</reference>
<reference key="4">
    <citation type="journal article" date="2016" name="Arterioscler. Thromb. Vasc. Biol.">
        <title>miRNA Targeting of Oxysterol-Binding Protein-Like 6 Regulates Cholesterol Trafficking and Efflux.</title>
        <authorList>
            <person name="Ouimet M."/>
            <person name="Hennessy E.J."/>
            <person name="van Solingen C."/>
            <person name="Koelwyn G.J."/>
            <person name="Hussein M.A."/>
            <person name="Ramkhelawon B."/>
            <person name="Rayner K.J."/>
            <person name="Temel R.E."/>
            <person name="Perisic L."/>
            <person name="Hedin U."/>
            <person name="Maegdefessel L."/>
            <person name="Garabedian M.J."/>
            <person name="Holdt L.M."/>
            <person name="Teupser D."/>
            <person name="Moore K.J."/>
        </authorList>
    </citation>
    <scope>TISSUE SPECIFICITY</scope>
    <scope>INDUCTION</scope>
</reference>
<reference key="5">
    <citation type="journal article" date="2018" name="Exp. Cell Res.">
        <title>Oxysterol-binding protein-related protein (ORP) 6 localizes to the ER and ER-plasma membrane contact sites and is involved in the turnover of PI4P in cerebellar granule neurons.</title>
        <authorList>
            <person name="Mochizuki S."/>
            <person name="Miki H."/>
            <person name="Zhou R."/>
            <person name="Kido Y."/>
            <person name="Nishimura W."/>
            <person name="Kikuchi M."/>
            <person name="Noda Y."/>
        </authorList>
    </citation>
    <scope>FUNCTION</scope>
    <scope>SUBUNIT</scope>
    <scope>INTERACTION WITH OSBPL3</scope>
    <scope>SUBCELLULAR LOCATION</scope>
    <scope>TISSUE SPECIFICITY</scope>
    <scope>DEVELOPMENTAL STAGE</scope>
</reference>